<dbReference type="EMBL" id="CP000029">
    <property type="protein sequence ID" value="AAW53488.1"/>
    <property type="molecule type" value="Genomic_DNA"/>
</dbReference>
<dbReference type="RefSeq" id="WP_001832195.1">
    <property type="nucleotide sequence ID" value="NC_002976.3"/>
</dbReference>
<dbReference type="SMR" id="Q5HRQ7"/>
<dbReference type="STRING" id="176279.SERP0136"/>
<dbReference type="GeneID" id="93670484"/>
<dbReference type="KEGG" id="ser:SERP0136"/>
<dbReference type="eggNOG" id="COG2088">
    <property type="taxonomic scope" value="Bacteria"/>
</dbReference>
<dbReference type="HOGENOM" id="CLU_103669_2_1_9"/>
<dbReference type="Proteomes" id="UP000000531">
    <property type="component" value="Chromosome"/>
</dbReference>
<dbReference type="GO" id="GO:0000917">
    <property type="term" value="P:division septum assembly"/>
    <property type="evidence" value="ECO:0007669"/>
    <property type="project" value="UniProtKB-KW"/>
</dbReference>
<dbReference type="GO" id="GO:0030435">
    <property type="term" value="P:sporulation resulting in formation of a cellular spore"/>
    <property type="evidence" value="ECO:0007669"/>
    <property type="project" value="InterPro"/>
</dbReference>
<dbReference type="Gene3D" id="3.30.1120.40">
    <property type="entry name" value="Stage V sporulation protein G"/>
    <property type="match status" value="1"/>
</dbReference>
<dbReference type="HAMAP" id="MF_00819">
    <property type="entry name" value="SpoVG"/>
    <property type="match status" value="1"/>
</dbReference>
<dbReference type="InterPro" id="IPR007170">
    <property type="entry name" value="SpoVG"/>
</dbReference>
<dbReference type="InterPro" id="IPR036751">
    <property type="entry name" value="SpoVG_sf"/>
</dbReference>
<dbReference type="NCBIfam" id="NF009749">
    <property type="entry name" value="PRK13259.1"/>
    <property type="match status" value="1"/>
</dbReference>
<dbReference type="PANTHER" id="PTHR38429">
    <property type="entry name" value="SEPTATION PROTEIN SPOVG-RELATED"/>
    <property type="match status" value="1"/>
</dbReference>
<dbReference type="PANTHER" id="PTHR38429:SF1">
    <property type="entry name" value="SEPTATION PROTEIN SPOVG-RELATED"/>
    <property type="match status" value="1"/>
</dbReference>
<dbReference type="Pfam" id="PF04026">
    <property type="entry name" value="SpoVG"/>
    <property type="match status" value="1"/>
</dbReference>
<dbReference type="SUPFAM" id="SSF160537">
    <property type="entry name" value="SpoVG-like"/>
    <property type="match status" value="1"/>
</dbReference>
<sequence>MKVTDVRLRKIQTDGRMKALVSITLDEAFVIHDLRVIEGNSGLFVAMPSKRTPDGEFRDIAHPINSDMRQEIQDAVMKVYDETDEVIPDKNATSDNEESDEA</sequence>
<comment type="function">
    <text evidence="1">Could be involved in septation.</text>
</comment>
<comment type="similarity">
    <text evidence="1">Belongs to the SpoVG family.</text>
</comment>
<accession>Q5HRQ7</accession>
<organism>
    <name type="scientific">Staphylococcus epidermidis (strain ATCC 35984 / DSM 28319 / BCRC 17069 / CCUG 31568 / BM 3577 / RP62A)</name>
    <dbReference type="NCBI Taxonomy" id="176279"/>
    <lineage>
        <taxon>Bacteria</taxon>
        <taxon>Bacillati</taxon>
        <taxon>Bacillota</taxon>
        <taxon>Bacilli</taxon>
        <taxon>Bacillales</taxon>
        <taxon>Staphylococcaceae</taxon>
        <taxon>Staphylococcus</taxon>
    </lineage>
</organism>
<keyword id="KW-0131">Cell cycle</keyword>
<keyword id="KW-0132">Cell division</keyword>
<keyword id="KW-1185">Reference proteome</keyword>
<keyword id="KW-0717">Septation</keyword>
<reference key="1">
    <citation type="journal article" date="2005" name="J. Bacteriol.">
        <title>Insights on evolution of virulence and resistance from the complete genome analysis of an early methicillin-resistant Staphylococcus aureus strain and a biofilm-producing methicillin-resistant Staphylococcus epidermidis strain.</title>
        <authorList>
            <person name="Gill S.R."/>
            <person name="Fouts D.E."/>
            <person name="Archer G.L."/>
            <person name="Mongodin E.F."/>
            <person name="DeBoy R.T."/>
            <person name="Ravel J."/>
            <person name="Paulsen I.T."/>
            <person name="Kolonay J.F."/>
            <person name="Brinkac L.M."/>
            <person name="Beanan M.J."/>
            <person name="Dodson R.J."/>
            <person name="Daugherty S.C."/>
            <person name="Madupu R."/>
            <person name="Angiuoli S.V."/>
            <person name="Durkin A.S."/>
            <person name="Haft D.H."/>
            <person name="Vamathevan J.J."/>
            <person name="Khouri H."/>
            <person name="Utterback T.R."/>
            <person name="Lee C."/>
            <person name="Dimitrov G."/>
            <person name="Jiang L."/>
            <person name="Qin H."/>
            <person name="Weidman J."/>
            <person name="Tran K."/>
            <person name="Kang K.H."/>
            <person name="Hance I.R."/>
            <person name="Nelson K.E."/>
            <person name="Fraser C.M."/>
        </authorList>
    </citation>
    <scope>NUCLEOTIDE SEQUENCE [LARGE SCALE GENOMIC DNA]</scope>
    <source>
        <strain>ATCC 35984 / DSM 28319 / BCRC 17069 / CCUG 31568 / BM 3577 / RP62A</strain>
    </source>
</reference>
<gene>
    <name evidence="1" type="primary">spoVG</name>
    <name type="ordered locus">SERP0136</name>
</gene>
<name>SP5G_STAEQ</name>
<proteinExistence type="inferred from homology"/>
<feature type="chain" id="PRO_0000157212" description="Putative septation protein SpoVG">
    <location>
        <begin position="1"/>
        <end position="102"/>
    </location>
</feature>
<feature type="region of interest" description="Disordered" evidence="2">
    <location>
        <begin position="83"/>
        <end position="102"/>
    </location>
</feature>
<evidence type="ECO:0000255" key="1">
    <source>
        <dbReference type="HAMAP-Rule" id="MF_00819"/>
    </source>
</evidence>
<evidence type="ECO:0000256" key="2">
    <source>
        <dbReference type="SAM" id="MobiDB-lite"/>
    </source>
</evidence>
<protein>
    <recommendedName>
        <fullName evidence="1">Putative septation protein SpoVG</fullName>
    </recommendedName>
</protein>